<accession>A7IB57</accession>
<organism>
    <name type="scientific">Methanoregula boonei (strain DSM 21154 / JCM 14090 / 6A8)</name>
    <dbReference type="NCBI Taxonomy" id="456442"/>
    <lineage>
        <taxon>Archaea</taxon>
        <taxon>Methanobacteriati</taxon>
        <taxon>Methanobacteriota</taxon>
        <taxon>Stenosarchaea group</taxon>
        <taxon>Methanomicrobia</taxon>
        <taxon>Methanomicrobiales</taxon>
        <taxon>Methanoregulaceae</taxon>
        <taxon>Methanoregula</taxon>
    </lineage>
</organism>
<comment type="catalytic activity">
    <reaction evidence="1">
        <text>D-glyceraldehyde 3-phosphate + phosphate + NADP(+) = (2R)-3-phospho-glyceroyl phosphate + NADPH + H(+)</text>
        <dbReference type="Rhea" id="RHEA:10296"/>
        <dbReference type="ChEBI" id="CHEBI:15378"/>
        <dbReference type="ChEBI" id="CHEBI:43474"/>
        <dbReference type="ChEBI" id="CHEBI:57604"/>
        <dbReference type="ChEBI" id="CHEBI:57783"/>
        <dbReference type="ChEBI" id="CHEBI:58349"/>
        <dbReference type="ChEBI" id="CHEBI:59776"/>
        <dbReference type="EC" id="1.2.1.59"/>
    </reaction>
</comment>
<comment type="catalytic activity">
    <reaction evidence="1">
        <text>D-glyceraldehyde 3-phosphate + phosphate + NAD(+) = (2R)-3-phospho-glyceroyl phosphate + NADH + H(+)</text>
        <dbReference type="Rhea" id="RHEA:10300"/>
        <dbReference type="ChEBI" id="CHEBI:15378"/>
        <dbReference type="ChEBI" id="CHEBI:43474"/>
        <dbReference type="ChEBI" id="CHEBI:57540"/>
        <dbReference type="ChEBI" id="CHEBI:57604"/>
        <dbReference type="ChEBI" id="CHEBI:57945"/>
        <dbReference type="ChEBI" id="CHEBI:59776"/>
        <dbReference type="EC" id="1.2.1.59"/>
    </reaction>
</comment>
<comment type="pathway">
    <text evidence="1">Carbohydrate degradation; glycolysis; pyruvate from D-glyceraldehyde 3-phosphate: step 1/5.</text>
</comment>
<comment type="subunit">
    <text evidence="1">Homotetramer.</text>
</comment>
<comment type="subcellular location">
    <subcellularLocation>
        <location evidence="1">Cytoplasm</location>
    </subcellularLocation>
</comment>
<comment type="similarity">
    <text evidence="1">Belongs to the glyceraldehyde-3-phosphate dehydrogenase family.</text>
</comment>
<protein>
    <recommendedName>
        <fullName evidence="1">Glyceraldehyde-3-phosphate dehydrogenase</fullName>
        <shortName evidence="1">GAPDH</shortName>
        <ecNumber evidence="1">1.2.1.59</ecNumber>
    </recommendedName>
    <alternativeName>
        <fullName evidence="1">NAD(P)-dependent glyceraldehyde-3-phosphate dehydrogenase</fullName>
    </alternativeName>
</protein>
<reference key="1">
    <citation type="journal article" date="2015" name="Microbiology">
        <title>Genome of Methanoregula boonei 6A8 reveals adaptations to oligotrophic peatland environments.</title>
        <authorList>
            <person name="Braeuer S."/>
            <person name="Cadillo-Quiroz H."/>
            <person name="Kyrpides N."/>
            <person name="Woyke T."/>
            <person name="Goodwin L."/>
            <person name="Detter C."/>
            <person name="Podell S."/>
            <person name="Yavitt J.B."/>
            <person name="Zinder S.H."/>
        </authorList>
    </citation>
    <scope>NUCLEOTIDE SEQUENCE [LARGE SCALE GENOMIC DNA]</scope>
    <source>
        <strain>DSM 21154 / JCM 14090 / 6A8</strain>
    </source>
</reference>
<proteinExistence type="inferred from homology"/>
<evidence type="ECO:0000255" key="1">
    <source>
        <dbReference type="HAMAP-Rule" id="MF_00559"/>
    </source>
</evidence>
<sequence length="343" mass="37403">MIKVAINGYGTIGKRVADAVAAQKDMKVIGVSKTRPNAEAFIAKQRGYPLYIADLSKKAAFEKAGLTVAGSVEDMCKAADVIVDATPGDIGVTNKPLYEKLGKKALWQGGEDHEVAGFSFNSSCNFKDAIGRQFIRVVSCNTTGLCRIINEVDKAFGVEHVHAIMVRRGSDPGEIKKGPIDAVVLDPVTVPSHHGPDVQTVLPHISITTMAMIVPTTMMHMHAVRITTKKEVNREKVIELIKNHPRLGLVKKSAGIKSTAELKEFAMDLGRQRADLYENCIFEDSIYANKNELCFFQAIHQEADVVVENVDAIRAMTSLANDGTASIKLTNDALHFVPIQNNH</sequence>
<feature type="chain" id="PRO_1000061116" description="Glyceraldehyde-3-phosphate dehydrogenase">
    <location>
        <begin position="1"/>
        <end position="343"/>
    </location>
</feature>
<feature type="active site" description="Nucleophile" evidence="1">
    <location>
        <position position="140"/>
    </location>
</feature>
<feature type="binding site" evidence="1">
    <location>
        <begin position="11"/>
        <end position="12"/>
    </location>
    <ligand>
        <name>NAD(+)</name>
        <dbReference type="ChEBI" id="CHEBI:57540"/>
    </ligand>
</feature>
<feature type="binding site" evidence="1">
    <location>
        <position position="110"/>
    </location>
    <ligand>
        <name>NAD(+)</name>
        <dbReference type="ChEBI" id="CHEBI:57540"/>
    </ligand>
</feature>
<feature type="binding site" evidence="1">
    <location>
        <begin position="139"/>
        <end position="141"/>
    </location>
    <ligand>
        <name>D-glyceraldehyde 3-phosphate</name>
        <dbReference type="ChEBI" id="CHEBI:59776"/>
    </ligand>
</feature>
<feature type="binding site" evidence="1">
    <location>
        <position position="168"/>
    </location>
    <ligand>
        <name>NAD(+)</name>
        <dbReference type="ChEBI" id="CHEBI:57540"/>
    </ligand>
</feature>
<feature type="binding site" evidence="1">
    <location>
        <begin position="194"/>
        <end position="195"/>
    </location>
    <ligand>
        <name>D-glyceraldehyde 3-phosphate</name>
        <dbReference type="ChEBI" id="CHEBI:59776"/>
    </ligand>
</feature>
<feature type="binding site" evidence="1">
    <location>
        <position position="301"/>
    </location>
    <ligand>
        <name>NAD(+)</name>
        <dbReference type="ChEBI" id="CHEBI:57540"/>
    </ligand>
</feature>
<keyword id="KW-0963">Cytoplasm</keyword>
<keyword id="KW-0324">Glycolysis</keyword>
<keyword id="KW-0520">NAD</keyword>
<keyword id="KW-0521">NADP</keyword>
<keyword id="KW-0560">Oxidoreductase</keyword>
<keyword id="KW-1185">Reference proteome</keyword>
<name>G3P_METB6</name>
<gene>
    <name evidence="1" type="primary">gap</name>
    <name type="ordered locus">Mboo_2454</name>
</gene>
<dbReference type="EC" id="1.2.1.59" evidence="1"/>
<dbReference type="EMBL" id="CP000780">
    <property type="protein sequence ID" value="ABS56968.1"/>
    <property type="molecule type" value="Genomic_DNA"/>
</dbReference>
<dbReference type="RefSeq" id="WP_012108032.1">
    <property type="nucleotide sequence ID" value="NC_009712.1"/>
</dbReference>
<dbReference type="SMR" id="A7IB57"/>
<dbReference type="STRING" id="456442.Mboo_2454"/>
<dbReference type="GeneID" id="5412014"/>
<dbReference type="KEGG" id="mbn:Mboo_2454"/>
<dbReference type="eggNOG" id="arCOG00493">
    <property type="taxonomic scope" value="Archaea"/>
</dbReference>
<dbReference type="HOGENOM" id="CLU_069533_0_0_2"/>
<dbReference type="OrthoDB" id="295712at2157"/>
<dbReference type="UniPathway" id="UPA00109">
    <property type="reaction ID" value="UER00184"/>
</dbReference>
<dbReference type="Proteomes" id="UP000002408">
    <property type="component" value="Chromosome"/>
</dbReference>
<dbReference type="GO" id="GO:0005737">
    <property type="term" value="C:cytoplasm"/>
    <property type="evidence" value="ECO:0007669"/>
    <property type="project" value="UniProtKB-SubCell"/>
</dbReference>
<dbReference type="GO" id="GO:0008839">
    <property type="term" value="F:4-hydroxy-tetrahydrodipicolinate reductase"/>
    <property type="evidence" value="ECO:0007669"/>
    <property type="project" value="InterPro"/>
</dbReference>
<dbReference type="GO" id="GO:0004365">
    <property type="term" value="F:glyceraldehyde-3-phosphate dehydrogenase (NAD+) (phosphorylating) activity"/>
    <property type="evidence" value="ECO:0007669"/>
    <property type="project" value="UniProtKB-UniRule"/>
</dbReference>
<dbReference type="GO" id="GO:0047100">
    <property type="term" value="F:glyceraldehyde-3-phosphate dehydrogenase (NADP+) (phosphorylating) activity"/>
    <property type="evidence" value="ECO:0007669"/>
    <property type="project" value="RHEA"/>
</dbReference>
<dbReference type="GO" id="GO:0051287">
    <property type="term" value="F:NAD binding"/>
    <property type="evidence" value="ECO:0007669"/>
    <property type="project" value="InterPro"/>
</dbReference>
<dbReference type="GO" id="GO:0050661">
    <property type="term" value="F:NADP binding"/>
    <property type="evidence" value="ECO:0007669"/>
    <property type="project" value="InterPro"/>
</dbReference>
<dbReference type="GO" id="GO:0006096">
    <property type="term" value="P:glycolytic process"/>
    <property type="evidence" value="ECO:0007669"/>
    <property type="project" value="UniProtKB-UniRule"/>
</dbReference>
<dbReference type="GO" id="GO:0009089">
    <property type="term" value="P:lysine biosynthetic process via diaminopimelate"/>
    <property type="evidence" value="ECO:0007669"/>
    <property type="project" value="InterPro"/>
</dbReference>
<dbReference type="CDD" id="cd18127">
    <property type="entry name" value="GAPDH_II_C"/>
    <property type="match status" value="1"/>
</dbReference>
<dbReference type="CDD" id="cd02278">
    <property type="entry name" value="GAPDH_II_N"/>
    <property type="match status" value="1"/>
</dbReference>
<dbReference type="Gene3D" id="3.30.360.10">
    <property type="entry name" value="Dihydrodipicolinate Reductase, domain 2"/>
    <property type="match status" value="1"/>
</dbReference>
<dbReference type="Gene3D" id="3.40.50.720">
    <property type="entry name" value="NAD(P)-binding Rossmann-like Domain"/>
    <property type="match status" value="1"/>
</dbReference>
<dbReference type="HAMAP" id="MF_00559">
    <property type="entry name" value="G3P_dehdrog_arch"/>
    <property type="match status" value="1"/>
</dbReference>
<dbReference type="InterPro" id="IPR000846">
    <property type="entry name" value="DapB_N"/>
</dbReference>
<dbReference type="InterPro" id="IPR020831">
    <property type="entry name" value="GlycerAld/Erythrose_P_DH"/>
</dbReference>
<dbReference type="InterPro" id="IPR020830">
    <property type="entry name" value="GlycerAld_3-P_DH_AS"/>
</dbReference>
<dbReference type="InterPro" id="IPR020829">
    <property type="entry name" value="GlycerAld_3-P_DH_cat"/>
</dbReference>
<dbReference type="InterPro" id="IPR020828">
    <property type="entry name" value="GlycerAld_3-P_DH_NAD(P)-bd"/>
</dbReference>
<dbReference type="InterPro" id="IPR006436">
    <property type="entry name" value="Glyceraldehyde-3-P_DH_2_arc"/>
</dbReference>
<dbReference type="InterPro" id="IPR036291">
    <property type="entry name" value="NAD(P)-bd_dom_sf"/>
</dbReference>
<dbReference type="NCBIfam" id="TIGR01546">
    <property type="entry name" value="GAPDH-II_archae"/>
    <property type="match status" value="1"/>
</dbReference>
<dbReference type="NCBIfam" id="NF003251">
    <property type="entry name" value="PRK04207.1"/>
    <property type="match status" value="1"/>
</dbReference>
<dbReference type="Pfam" id="PF01113">
    <property type="entry name" value="DapB_N"/>
    <property type="match status" value="1"/>
</dbReference>
<dbReference type="Pfam" id="PF02800">
    <property type="entry name" value="Gp_dh_C"/>
    <property type="match status" value="1"/>
</dbReference>
<dbReference type="PIRSF" id="PIRSF000149">
    <property type="entry name" value="GAP_DH"/>
    <property type="match status" value="1"/>
</dbReference>
<dbReference type="SMART" id="SM00846">
    <property type="entry name" value="Gp_dh_N"/>
    <property type="match status" value="1"/>
</dbReference>
<dbReference type="SUPFAM" id="SSF55347">
    <property type="entry name" value="Glyceraldehyde-3-phosphate dehydrogenase-like, C-terminal domain"/>
    <property type="match status" value="1"/>
</dbReference>
<dbReference type="SUPFAM" id="SSF51735">
    <property type="entry name" value="NAD(P)-binding Rossmann-fold domains"/>
    <property type="match status" value="1"/>
</dbReference>
<dbReference type="PROSITE" id="PS00071">
    <property type="entry name" value="GAPDH"/>
    <property type="match status" value="1"/>
</dbReference>